<sequence length="150" mass="16055">MAKKLVGSMKLQIPAGQANPSPPVGPALGQRGINIMEFCKAFNAKTQEMEQGAPCPTVITYYQDKSFTMDIKTPPASYYLKKAAGLKPVGKRNRPRGAETPGRETVASITSKQLREIAEAKMVDLSANDVEAAMKIILGSAKSMGIEVKG</sequence>
<keyword id="KW-0488">Methylation</keyword>
<keyword id="KW-1185">Reference proteome</keyword>
<keyword id="KW-0687">Ribonucleoprotein</keyword>
<keyword id="KW-0689">Ribosomal protein</keyword>
<keyword id="KW-0694">RNA-binding</keyword>
<keyword id="KW-0699">rRNA-binding</keyword>
<dbReference type="EMBL" id="CP000264">
    <property type="protein sequence ID" value="ABD53480.1"/>
    <property type="molecule type" value="Genomic_DNA"/>
</dbReference>
<dbReference type="RefSeq" id="WP_011453689.1">
    <property type="nucleotide sequence ID" value="NC_007802.1"/>
</dbReference>
<dbReference type="SMR" id="Q28UY2"/>
<dbReference type="STRING" id="290400.Jann_0563"/>
<dbReference type="KEGG" id="jan:Jann_0563"/>
<dbReference type="eggNOG" id="COG0080">
    <property type="taxonomic scope" value="Bacteria"/>
</dbReference>
<dbReference type="HOGENOM" id="CLU_074237_2_0_5"/>
<dbReference type="OrthoDB" id="9802408at2"/>
<dbReference type="Proteomes" id="UP000008326">
    <property type="component" value="Chromosome"/>
</dbReference>
<dbReference type="GO" id="GO:0022625">
    <property type="term" value="C:cytosolic large ribosomal subunit"/>
    <property type="evidence" value="ECO:0007669"/>
    <property type="project" value="TreeGrafter"/>
</dbReference>
<dbReference type="GO" id="GO:0070180">
    <property type="term" value="F:large ribosomal subunit rRNA binding"/>
    <property type="evidence" value="ECO:0007669"/>
    <property type="project" value="UniProtKB-UniRule"/>
</dbReference>
<dbReference type="GO" id="GO:0003735">
    <property type="term" value="F:structural constituent of ribosome"/>
    <property type="evidence" value="ECO:0007669"/>
    <property type="project" value="InterPro"/>
</dbReference>
<dbReference type="GO" id="GO:0006412">
    <property type="term" value="P:translation"/>
    <property type="evidence" value="ECO:0007669"/>
    <property type="project" value="UniProtKB-UniRule"/>
</dbReference>
<dbReference type="CDD" id="cd00349">
    <property type="entry name" value="Ribosomal_L11"/>
    <property type="match status" value="1"/>
</dbReference>
<dbReference type="FunFam" id="1.10.10.250:FF:000001">
    <property type="entry name" value="50S ribosomal protein L11"/>
    <property type="match status" value="1"/>
</dbReference>
<dbReference type="FunFam" id="3.30.1550.10:FF:000001">
    <property type="entry name" value="50S ribosomal protein L11"/>
    <property type="match status" value="1"/>
</dbReference>
<dbReference type="Gene3D" id="1.10.10.250">
    <property type="entry name" value="Ribosomal protein L11, C-terminal domain"/>
    <property type="match status" value="1"/>
</dbReference>
<dbReference type="Gene3D" id="3.30.1550.10">
    <property type="entry name" value="Ribosomal protein L11/L12, N-terminal domain"/>
    <property type="match status" value="1"/>
</dbReference>
<dbReference type="HAMAP" id="MF_00736">
    <property type="entry name" value="Ribosomal_uL11"/>
    <property type="match status" value="1"/>
</dbReference>
<dbReference type="InterPro" id="IPR000911">
    <property type="entry name" value="Ribosomal_uL11"/>
</dbReference>
<dbReference type="InterPro" id="IPR006519">
    <property type="entry name" value="Ribosomal_uL11_bac-typ"/>
</dbReference>
<dbReference type="InterPro" id="IPR020783">
    <property type="entry name" value="Ribosomal_uL11_C"/>
</dbReference>
<dbReference type="InterPro" id="IPR036769">
    <property type="entry name" value="Ribosomal_uL11_C_sf"/>
</dbReference>
<dbReference type="InterPro" id="IPR020785">
    <property type="entry name" value="Ribosomal_uL11_CS"/>
</dbReference>
<dbReference type="InterPro" id="IPR020784">
    <property type="entry name" value="Ribosomal_uL11_N"/>
</dbReference>
<dbReference type="InterPro" id="IPR036796">
    <property type="entry name" value="Ribosomal_uL11_N_sf"/>
</dbReference>
<dbReference type="NCBIfam" id="TIGR01632">
    <property type="entry name" value="L11_bact"/>
    <property type="match status" value="1"/>
</dbReference>
<dbReference type="PANTHER" id="PTHR11661">
    <property type="entry name" value="60S RIBOSOMAL PROTEIN L12"/>
    <property type="match status" value="1"/>
</dbReference>
<dbReference type="PANTHER" id="PTHR11661:SF1">
    <property type="entry name" value="LARGE RIBOSOMAL SUBUNIT PROTEIN UL11M"/>
    <property type="match status" value="1"/>
</dbReference>
<dbReference type="Pfam" id="PF00298">
    <property type="entry name" value="Ribosomal_L11"/>
    <property type="match status" value="1"/>
</dbReference>
<dbReference type="Pfam" id="PF03946">
    <property type="entry name" value="Ribosomal_L11_N"/>
    <property type="match status" value="1"/>
</dbReference>
<dbReference type="SMART" id="SM00649">
    <property type="entry name" value="RL11"/>
    <property type="match status" value="1"/>
</dbReference>
<dbReference type="SUPFAM" id="SSF54747">
    <property type="entry name" value="Ribosomal L11/L12e N-terminal domain"/>
    <property type="match status" value="1"/>
</dbReference>
<dbReference type="SUPFAM" id="SSF46906">
    <property type="entry name" value="Ribosomal protein L11, C-terminal domain"/>
    <property type="match status" value="1"/>
</dbReference>
<dbReference type="PROSITE" id="PS00359">
    <property type="entry name" value="RIBOSOMAL_L11"/>
    <property type="match status" value="1"/>
</dbReference>
<reference key="1">
    <citation type="submission" date="2006-02" db="EMBL/GenBank/DDBJ databases">
        <title>Complete sequence of chromosome of Jannaschia sp. CCS1.</title>
        <authorList>
            <consortium name="US DOE Joint Genome Institute"/>
            <person name="Copeland A."/>
            <person name="Lucas S."/>
            <person name="Lapidus A."/>
            <person name="Barry K."/>
            <person name="Detter J.C."/>
            <person name="Glavina del Rio T."/>
            <person name="Hammon N."/>
            <person name="Israni S."/>
            <person name="Pitluck S."/>
            <person name="Brettin T."/>
            <person name="Bruce D."/>
            <person name="Han C."/>
            <person name="Tapia R."/>
            <person name="Gilna P."/>
            <person name="Chertkov O."/>
            <person name="Saunders E."/>
            <person name="Schmutz J."/>
            <person name="Larimer F."/>
            <person name="Land M."/>
            <person name="Kyrpides N."/>
            <person name="Lykidis A."/>
            <person name="Moran M.A."/>
            <person name="Belas R."/>
            <person name="Ye W."/>
            <person name="Buchan A."/>
            <person name="Gonzalez J.M."/>
            <person name="Schell M.A."/>
            <person name="Richardson P."/>
        </authorList>
    </citation>
    <scope>NUCLEOTIDE SEQUENCE [LARGE SCALE GENOMIC DNA]</scope>
    <source>
        <strain>CCS1</strain>
    </source>
</reference>
<feature type="chain" id="PRO_0000258162" description="Large ribosomal subunit protein uL11">
    <location>
        <begin position="1"/>
        <end position="150"/>
    </location>
</feature>
<organism>
    <name type="scientific">Jannaschia sp. (strain CCS1)</name>
    <dbReference type="NCBI Taxonomy" id="290400"/>
    <lineage>
        <taxon>Bacteria</taxon>
        <taxon>Pseudomonadati</taxon>
        <taxon>Pseudomonadota</taxon>
        <taxon>Alphaproteobacteria</taxon>
        <taxon>Rhodobacterales</taxon>
        <taxon>Roseobacteraceae</taxon>
        <taxon>Jannaschia</taxon>
    </lineage>
</organism>
<proteinExistence type="inferred from homology"/>
<protein>
    <recommendedName>
        <fullName evidence="1">Large ribosomal subunit protein uL11</fullName>
    </recommendedName>
    <alternativeName>
        <fullName evidence="2">50S ribosomal protein L11</fullName>
    </alternativeName>
</protein>
<accession>Q28UY2</accession>
<comment type="function">
    <text evidence="1">Forms part of the ribosomal stalk which helps the ribosome interact with GTP-bound translation factors.</text>
</comment>
<comment type="subunit">
    <text evidence="1">Part of the ribosomal stalk of the 50S ribosomal subunit. Interacts with L10 and the large rRNA to form the base of the stalk. L10 forms an elongated spine to which L12 dimers bind in a sequential fashion forming a multimeric L10(L12)X complex.</text>
</comment>
<comment type="PTM">
    <text evidence="1">One or more lysine residues are methylated.</text>
</comment>
<comment type="similarity">
    <text evidence="1">Belongs to the universal ribosomal protein uL11 family.</text>
</comment>
<gene>
    <name evidence="1" type="primary">rplK</name>
    <name type="ordered locus">Jann_0563</name>
</gene>
<evidence type="ECO:0000255" key="1">
    <source>
        <dbReference type="HAMAP-Rule" id="MF_00736"/>
    </source>
</evidence>
<evidence type="ECO:0000305" key="2"/>
<name>RL11_JANSC</name>